<organism>
    <name type="scientific">Yersinia pestis</name>
    <dbReference type="NCBI Taxonomy" id="632"/>
    <lineage>
        <taxon>Bacteria</taxon>
        <taxon>Pseudomonadati</taxon>
        <taxon>Pseudomonadota</taxon>
        <taxon>Gammaproteobacteria</taxon>
        <taxon>Enterobacterales</taxon>
        <taxon>Yersiniaceae</taxon>
        <taxon>Yersinia</taxon>
    </lineage>
</organism>
<name>SSTT_YERPE</name>
<keyword id="KW-0029">Amino-acid transport</keyword>
<keyword id="KW-0997">Cell inner membrane</keyword>
<keyword id="KW-1003">Cell membrane</keyword>
<keyword id="KW-0472">Membrane</keyword>
<keyword id="KW-1185">Reference proteome</keyword>
<keyword id="KW-0769">Symport</keyword>
<keyword id="KW-0812">Transmembrane</keyword>
<keyword id="KW-1133">Transmembrane helix</keyword>
<keyword id="KW-0813">Transport</keyword>
<protein>
    <recommendedName>
        <fullName evidence="1">Serine/threonine transporter SstT</fullName>
    </recommendedName>
    <alternativeName>
        <fullName evidence="1">Na(+)/serine-threonine symporter</fullName>
    </alternativeName>
</protein>
<reference key="1">
    <citation type="journal article" date="2001" name="Nature">
        <title>Genome sequence of Yersinia pestis, the causative agent of plague.</title>
        <authorList>
            <person name="Parkhill J."/>
            <person name="Wren B.W."/>
            <person name="Thomson N.R."/>
            <person name="Titball R.W."/>
            <person name="Holden M.T.G."/>
            <person name="Prentice M.B."/>
            <person name="Sebaihia M."/>
            <person name="James K.D."/>
            <person name="Churcher C.M."/>
            <person name="Mungall K.L."/>
            <person name="Baker S."/>
            <person name="Basham D."/>
            <person name="Bentley S.D."/>
            <person name="Brooks K."/>
            <person name="Cerdeno-Tarraga A.-M."/>
            <person name="Chillingworth T."/>
            <person name="Cronin A."/>
            <person name="Davies R.M."/>
            <person name="Davis P."/>
            <person name="Dougan G."/>
            <person name="Feltwell T."/>
            <person name="Hamlin N."/>
            <person name="Holroyd S."/>
            <person name="Jagels K."/>
            <person name="Karlyshev A.V."/>
            <person name="Leather S."/>
            <person name="Moule S."/>
            <person name="Oyston P.C.F."/>
            <person name="Quail M.A."/>
            <person name="Rutherford K.M."/>
            <person name="Simmonds M."/>
            <person name="Skelton J."/>
            <person name="Stevens K."/>
            <person name="Whitehead S."/>
            <person name="Barrell B.G."/>
        </authorList>
    </citation>
    <scope>NUCLEOTIDE SEQUENCE [LARGE SCALE GENOMIC DNA]</scope>
    <source>
        <strain>CO-92 / Biovar Orientalis</strain>
    </source>
</reference>
<reference key="2">
    <citation type="journal article" date="2002" name="J. Bacteriol.">
        <title>Genome sequence of Yersinia pestis KIM.</title>
        <authorList>
            <person name="Deng W."/>
            <person name="Burland V."/>
            <person name="Plunkett G. III"/>
            <person name="Boutin A."/>
            <person name="Mayhew G.F."/>
            <person name="Liss P."/>
            <person name="Perna N.T."/>
            <person name="Rose D.J."/>
            <person name="Mau B."/>
            <person name="Zhou S."/>
            <person name="Schwartz D.C."/>
            <person name="Fetherston J.D."/>
            <person name="Lindler L.E."/>
            <person name="Brubaker R.R."/>
            <person name="Plano G.V."/>
            <person name="Straley S.C."/>
            <person name="McDonough K.A."/>
            <person name="Nilles M.L."/>
            <person name="Matson J.S."/>
            <person name="Blattner F.R."/>
            <person name="Perry R.D."/>
        </authorList>
    </citation>
    <scope>NUCLEOTIDE SEQUENCE [LARGE SCALE GENOMIC DNA]</scope>
    <source>
        <strain>KIM10+ / Biovar Mediaevalis</strain>
    </source>
</reference>
<reference key="3">
    <citation type="journal article" date="2004" name="DNA Res.">
        <title>Complete genome sequence of Yersinia pestis strain 91001, an isolate avirulent to humans.</title>
        <authorList>
            <person name="Song Y."/>
            <person name="Tong Z."/>
            <person name="Wang J."/>
            <person name="Wang L."/>
            <person name="Guo Z."/>
            <person name="Han Y."/>
            <person name="Zhang J."/>
            <person name="Pei D."/>
            <person name="Zhou D."/>
            <person name="Qin H."/>
            <person name="Pang X."/>
            <person name="Han Y."/>
            <person name="Zhai J."/>
            <person name="Li M."/>
            <person name="Cui B."/>
            <person name="Qi Z."/>
            <person name="Jin L."/>
            <person name="Dai R."/>
            <person name="Chen F."/>
            <person name="Li S."/>
            <person name="Ye C."/>
            <person name="Du Z."/>
            <person name="Lin W."/>
            <person name="Wang J."/>
            <person name="Yu J."/>
            <person name="Yang H."/>
            <person name="Wang J."/>
            <person name="Huang P."/>
            <person name="Yang R."/>
        </authorList>
    </citation>
    <scope>NUCLEOTIDE SEQUENCE [LARGE SCALE GENOMIC DNA]</scope>
    <source>
        <strain>91001 / Biovar Mediaevalis</strain>
    </source>
</reference>
<accession>Q0WJ82</accession>
<accession>Q74RW2</accession>
<accession>Q8CZR1</accession>
<proteinExistence type="inferred from homology"/>
<feature type="chain" id="PRO_0000309158" description="Serine/threonine transporter SstT">
    <location>
        <begin position="1"/>
        <end position="418"/>
    </location>
</feature>
<feature type="transmembrane region" description="Helical" evidence="1">
    <location>
        <begin position="21"/>
        <end position="41"/>
    </location>
</feature>
<feature type="transmembrane region" description="Helical" evidence="1">
    <location>
        <begin position="49"/>
        <end position="69"/>
    </location>
</feature>
<feature type="transmembrane region" description="Helical" evidence="1">
    <location>
        <begin position="83"/>
        <end position="103"/>
    </location>
</feature>
<feature type="transmembrane region" description="Helical" evidence="1">
    <location>
        <begin position="142"/>
        <end position="162"/>
    </location>
</feature>
<feature type="transmembrane region" description="Helical" evidence="1">
    <location>
        <begin position="190"/>
        <end position="210"/>
    </location>
</feature>
<feature type="transmembrane region" description="Helical" evidence="1">
    <location>
        <begin position="217"/>
        <end position="237"/>
    </location>
</feature>
<feature type="transmembrane region" description="Helical" evidence="1">
    <location>
        <begin position="299"/>
        <end position="319"/>
    </location>
</feature>
<feature type="transmembrane region" description="Helical" evidence="1">
    <location>
        <begin position="331"/>
        <end position="351"/>
    </location>
</feature>
<evidence type="ECO:0000255" key="1">
    <source>
        <dbReference type="HAMAP-Rule" id="MF_01582"/>
    </source>
</evidence>
<evidence type="ECO:0000305" key="2"/>
<gene>
    <name evidence="1" type="primary">sstT</name>
    <name type="ordered locus">YPO0584</name>
    <name type="ordered locus">y3595</name>
    <name type="ordered locus">YP_2904</name>
</gene>
<sequence>MEKTQSVFIRFIVNGSLVKQILIGLVAGIVLALVSTPAAIAVGLLGSLFVGALKAVAPVLVLMLVIASIANHKKGQKTSIRPILFLYVLGTFSAALVAVVVSFIYPSTLILVAESADITPPSGIVEVLHGLLNSIIANPIHALLNANYIGILAWAVGLGIALRHAADTTKALINDMSDAVTLVVRVVIRFAPLGIFGLVASTIAATGFGALQLYAQLLVVLIGCMLLVALVVNPLIVYWKIRRNPYPLVFACLRESGVTAFFTRSSAANIPVNMEMCKKMNLNEDTYSISIPLGATINMAGAAITITVLTLAAVHTLGITVDLPTALLLSVVAAICACGASGVAGGSLLLIPLACSMFGIPNDVAMQVVGVGFIIGVLQDSAETALNSSTDVLFTAAVCQAEDAKLANPDPLAAGKSV</sequence>
<comment type="function">
    <text evidence="1">Involved in the import of serine and threonine into the cell, with the concomitant import of sodium (symport system).</text>
</comment>
<comment type="catalytic activity">
    <reaction evidence="1">
        <text>L-serine(in) + Na(+)(in) = L-serine(out) + Na(+)(out)</text>
        <dbReference type="Rhea" id="RHEA:29575"/>
        <dbReference type="ChEBI" id="CHEBI:29101"/>
        <dbReference type="ChEBI" id="CHEBI:33384"/>
    </reaction>
    <physiologicalReaction direction="right-to-left" evidence="1">
        <dbReference type="Rhea" id="RHEA:29577"/>
    </physiologicalReaction>
</comment>
<comment type="catalytic activity">
    <reaction evidence="1">
        <text>L-threonine(in) + Na(+)(in) = L-threonine(out) + Na(+)(out)</text>
        <dbReference type="Rhea" id="RHEA:69999"/>
        <dbReference type="ChEBI" id="CHEBI:29101"/>
        <dbReference type="ChEBI" id="CHEBI:57926"/>
    </reaction>
    <physiologicalReaction direction="right-to-left" evidence="1">
        <dbReference type="Rhea" id="RHEA:70001"/>
    </physiologicalReaction>
</comment>
<comment type="subcellular location">
    <subcellularLocation>
        <location evidence="1">Cell inner membrane</location>
        <topology evidence="1">Multi-pass membrane protein</topology>
    </subcellularLocation>
</comment>
<comment type="similarity">
    <text evidence="1">Belongs to the dicarboxylate/amino acid:cation symporter (DAACS) (TC 2.A.23) family.</text>
</comment>
<comment type="sequence caution" evidence="2">
    <conflict type="erroneous initiation">
        <sequence resource="EMBL-CDS" id="AAM87143"/>
    </conflict>
</comment>
<comment type="sequence caution" evidence="2">
    <conflict type="erroneous initiation">
        <sequence resource="EMBL-CDS" id="AAS63086"/>
    </conflict>
</comment>
<comment type="sequence caution" evidence="2">
    <conflict type="erroneous initiation">
        <sequence resource="EMBL-CDS" id="CAL19264"/>
    </conflict>
</comment>
<dbReference type="EMBL" id="AL590842">
    <property type="protein sequence ID" value="CAL19264.1"/>
    <property type="status" value="ALT_INIT"/>
    <property type="molecule type" value="Genomic_DNA"/>
</dbReference>
<dbReference type="EMBL" id="AE009952">
    <property type="protein sequence ID" value="AAM87143.1"/>
    <property type="status" value="ALT_INIT"/>
    <property type="molecule type" value="Genomic_DNA"/>
</dbReference>
<dbReference type="EMBL" id="AE017042">
    <property type="protein sequence ID" value="AAS63086.1"/>
    <property type="status" value="ALT_INIT"/>
    <property type="molecule type" value="Genomic_DNA"/>
</dbReference>
<dbReference type="PIR" id="AF0072">
    <property type="entry name" value="AF0072"/>
</dbReference>
<dbReference type="RefSeq" id="WP_002216063.1">
    <property type="nucleotide sequence ID" value="NZ_WUCM01000076.1"/>
</dbReference>
<dbReference type="RefSeq" id="YP_002345656.1">
    <property type="nucleotide sequence ID" value="NC_003143.1"/>
</dbReference>
<dbReference type="SMR" id="Q0WJ82"/>
<dbReference type="STRING" id="214092.YPO0584"/>
<dbReference type="PaxDb" id="214092-YPO0584"/>
<dbReference type="DNASU" id="1148542"/>
<dbReference type="EnsemblBacteria" id="AAS63086">
    <property type="protein sequence ID" value="AAS63086"/>
    <property type="gene ID" value="YP_2904"/>
</dbReference>
<dbReference type="GeneID" id="57974032"/>
<dbReference type="KEGG" id="ype:YPO0584"/>
<dbReference type="KEGG" id="ypk:y3595"/>
<dbReference type="KEGG" id="ypl:CH46_332"/>
<dbReference type="KEGG" id="ypm:YP_2904"/>
<dbReference type="KEGG" id="ypv:BZ15_2989"/>
<dbReference type="KEGG" id="ypw:CH59_1279"/>
<dbReference type="PATRIC" id="fig|214092.21.peg.841"/>
<dbReference type="eggNOG" id="COG3633">
    <property type="taxonomic scope" value="Bacteria"/>
</dbReference>
<dbReference type="HOGENOM" id="CLU_044581_0_0_6"/>
<dbReference type="Proteomes" id="UP000000815">
    <property type="component" value="Chromosome"/>
</dbReference>
<dbReference type="Proteomes" id="UP000001019">
    <property type="component" value="Chromosome"/>
</dbReference>
<dbReference type="Proteomes" id="UP000002490">
    <property type="component" value="Chromosome"/>
</dbReference>
<dbReference type="GO" id="GO:0005886">
    <property type="term" value="C:plasma membrane"/>
    <property type="evidence" value="ECO:0000318"/>
    <property type="project" value="GO_Central"/>
</dbReference>
<dbReference type="GO" id="GO:0005295">
    <property type="term" value="F:neutral L-amino acid:sodium symporter activity"/>
    <property type="evidence" value="ECO:0000318"/>
    <property type="project" value="GO_Central"/>
</dbReference>
<dbReference type="GO" id="GO:0032329">
    <property type="term" value="P:serine transport"/>
    <property type="evidence" value="ECO:0000318"/>
    <property type="project" value="GO_Central"/>
</dbReference>
<dbReference type="GO" id="GO:0015826">
    <property type="term" value="P:threonine transport"/>
    <property type="evidence" value="ECO:0007669"/>
    <property type="project" value="InterPro"/>
</dbReference>
<dbReference type="FunFam" id="1.10.3860.10:FF:000003">
    <property type="entry name" value="Serine/threonine transporter sstT"/>
    <property type="match status" value="1"/>
</dbReference>
<dbReference type="Gene3D" id="1.10.3860.10">
    <property type="entry name" value="Sodium:dicarboxylate symporter"/>
    <property type="match status" value="1"/>
</dbReference>
<dbReference type="HAMAP" id="MF_01582">
    <property type="entry name" value="Ser_Thr_transp_SstT"/>
    <property type="match status" value="1"/>
</dbReference>
<dbReference type="InterPro" id="IPR001991">
    <property type="entry name" value="Na-dicarboxylate_symporter"/>
</dbReference>
<dbReference type="InterPro" id="IPR036458">
    <property type="entry name" value="Na:dicarbo_symporter_sf"/>
</dbReference>
<dbReference type="InterPro" id="IPR023025">
    <property type="entry name" value="Ser_Thr_transp_SstT"/>
</dbReference>
<dbReference type="NCBIfam" id="NF010151">
    <property type="entry name" value="PRK13628.1"/>
    <property type="match status" value="1"/>
</dbReference>
<dbReference type="PANTHER" id="PTHR42865">
    <property type="entry name" value="PROTON/GLUTAMATE-ASPARTATE SYMPORTER"/>
    <property type="match status" value="1"/>
</dbReference>
<dbReference type="PANTHER" id="PTHR42865:SF8">
    <property type="entry name" value="SERINE_THREONINE TRANSPORTER SSTT"/>
    <property type="match status" value="1"/>
</dbReference>
<dbReference type="Pfam" id="PF00375">
    <property type="entry name" value="SDF"/>
    <property type="match status" value="1"/>
</dbReference>
<dbReference type="PRINTS" id="PR00173">
    <property type="entry name" value="EDTRNSPORT"/>
</dbReference>
<dbReference type="SUPFAM" id="SSF118215">
    <property type="entry name" value="Proton glutamate symport protein"/>
    <property type="match status" value="1"/>
</dbReference>